<accession>A7NPT5</accession>
<organism>
    <name type="scientific">Roseiflexus castenholzii (strain DSM 13941 / HLO8)</name>
    <dbReference type="NCBI Taxonomy" id="383372"/>
    <lineage>
        <taxon>Bacteria</taxon>
        <taxon>Bacillati</taxon>
        <taxon>Chloroflexota</taxon>
        <taxon>Chloroflexia</taxon>
        <taxon>Chloroflexales</taxon>
        <taxon>Roseiflexineae</taxon>
        <taxon>Roseiflexaceae</taxon>
        <taxon>Roseiflexus</taxon>
    </lineage>
</organism>
<keyword id="KW-0067">ATP-binding</keyword>
<keyword id="KW-0227">DNA damage</keyword>
<keyword id="KW-0234">DNA repair</keyword>
<keyword id="KW-0238">DNA-binding</keyword>
<keyword id="KW-0547">Nucleotide-binding</keyword>
<keyword id="KW-1185">Reference proteome</keyword>
<comment type="function">
    <text evidence="1">This protein is involved in the repair of mismatches in DNA. It is possible that it carries out the mismatch recognition step. This protein has a weak ATPase activity.</text>
</comment>
<comment type="similarity">
    <text evidence="1">Belongs to the DNA mismatch repair MutS family.</text>
</comment>
<dbReference type="EMBL" id="CP000804">
    <property type="protein sequence ID" value="ABU59581.1"/>
    <property type="molecule type" value="Genomic_DNA"/>
</dbReference>
<dbReference type="RefSeq" id="WP_012122004.1">
    <property type="nucleotide sequence ID" value="NC_009767.1"/>
</dbReference>
<dbReference type="SMR" id="A7NPT5"/>
<dbReference type="STRING" id="383372.Rcas_3531"/>
<dbReference type="KEGG" id="rca:Rcas_3531"/>
<dbReference type="eggNOG" id="COG0249">
    <property type="taxonomic scope" value="Bacteria"/>
</dbReference>
<dbReference type="HOGENOM" id="CLU_002472_3_1_0"/>
<dbReference type="OrthoDB" id="9802448at2"/>
<dbReference type="Proteomes" id="UP000000263">
    <property type="component" value="Chromosome"/>
</dbReference>
<dbReference type="GO" id="GO:0005829">
    <property type="term" value="C:cytosol"/>
    <property type="evidence" value="ECO:0007669"/>
    <property type="project" value="TreeGrafter"/>
</dbReference>
<dbReference type="GO" id="GO:0005524">
    <property type="term" value="F:ATP binding"/>
    <property type="evidence" value="ECO:0007669"/>
    <property type="project" value="UniProtKB-UniRule"/>
</dbReference>
<dbReference type="GO" id="GO:0140664">
    <property type="term" value="F:ATP-dependent DNA damage sensor activity"/>
    <property type="evidence" value="ECO:0007669"/>
    <property type="project" value="InterPro"/>
</dbReference>
<dbReference type="GO" id="GO:0003684">
    <property type="term" value="F:damaged DNA binding"/>
    <property type="evidence" value="ECO:0007669"/>
    <property type="project" value="UniProtKB-UniRule"/>
</dbReference>
<dbReference type="GO" id="GO:0030983">
    <property type="term" value="F:mismatched DNA binding"/>
    <property type="evidence" value="ECO:0007669"/>
    <property type="project" value="InterPro"/>
</dbReference>
<dbReference type="GO" id="GO:0006298">
    <property type="term" value="P:mismatch repair"/>
    <property type="evidence" value="ECO:0007669"/>
    <property type="project" value="UniProtKB-UniRule"/>
</dbReference>
<dbReference type="CDD" id="cd03284">
    <property type="entry name" value="ABC_MutS1"/>
    <property type="match status" value="1"/>
</dbReference>
<dbReference type="FunFam" id="1.10.1420.10:FF:000001">
    <property type="entry name" value="DNA mismatch repair protein MutS"/>
    <property type="match status" value="1"/>
</dbReference>
<dbReference type="FunFam" id="3.40.50.300:FF:001579">
    <property type="entry name" value="DNA mismatch repair protein MutS"/>
    <property type="match status" value="1"/>
</dbReference>
<dbReference type="Gene3D" id="1.10.1420.10">
    <property type="match status" value="2"/>
</dbReference>
<dbReference type="Gene3D" id="6.10.140.430">
    <property type="match status" value="1"/>
</dbReference>
<dbReference type="Gene3D" id="3.40.1170.10">
    <property type="entry name" value="DNA repair protein MutS, domain I"/>
    <property type="match status" value="1"/>
</dbReference>
<dbReference type="Gene3D" id="3.30.420.110">
    <property type="entry name" value="MutS, connector domain"/>
    <property type="match status" value="1"/>
</dbReference>
<dbReference type="Gene3D" id="3.40.50.300">
    <property type="entry name" value="P-loop containing nucleotide triphosphate hydrolases"/>
    <property type="match status" value="1"/>
</dbReference>
<dbReference type="HAMAP" id="MF_00096">
    <property type="entry name" value="MutS"/>
    <property type="match status" value="1"/>
</dbReference>
<dbReference type="InterPro" id="IPR005748">
    <property type="entry name" value="DNA_mismatch_repair_MutS"/>
</dbReference>
<dbReference type="InterPro" id="IPR007695">
    <property type="entry name" value="DNA_mismatch_repair_MutS-lik_N"/>
</dbReference>
<dbReference type="InterPro" id="IPR017261">
    <property type="entry name" value="DNA_mismatch_repair_MutS/MSH"/>
</dbReference>
<dbReference type="InterPro" id="IPR000432">
    <property type="entry name" value="DNA_mismatch_repair_MutS_C"/>
</dbReference>
<dbReference type="InterPro" id="IPR007861">
    <property type="entry name" value="DNA_mismatch_repair_MutS_clamp"/>
</dbReference>
<dbReference type="InterPro" id="IPR007696">
    <property type="entry name" value="DNA_mismatch_repair_MutS_core"/>
</dbReference>
<dbReference type="InterPro" id="IPR016151">
    <property type="entry name" value="DNA_mismatch_repair_MutS_N"/>
</dbReference>
<dbReference type="InterPro" id="IPR036187">
    <property type="entry name" value="DNA_mismatch_repair_MutS_sf"/>
</dbReference>
<dbReference type="InterPro" id="IPR007860">
    <property type="entry name" value="DNA_mmatch_repair_MutS_con_dom"/>
</dbReference>
<dbReference type="InterPro" id="IPR045076">
    <property type="entry name" value="MutS"/>
</dbReference>
<dbReference type="InterPro" id="IPR036678">
    <property type="entry name" value="MutS_con_dom_sf"/>
</dbReference>
<dbReference type="InterPro" id="IPR027417">
    <property type="entry name" value="P-loop_NTPase"/>
</dbReference>
<dbReference type="NCBIfam" id="NF003810">
    <property type="entry name" value="PRK05399.1"/>
    <property type="match status" value="1"/>
</dbReference>
<dbReference type="PANTHER" id="PTHR11361:SF34">
    <property type="entry name" value="DNA MISMATCH REPAIR PROTEIN MSH1, MITOCHONDRIAL"/>
    <property type="match status" value="1"/>
</dbReference>
<dbReference type="PANTHER" id="PTHR11361">
    <property type="entry name" value="DNA MISMATCH REPAIR PROTEIN MUTS FAMILY MEMBER"/>
    <property type="match status" value="1"/>
</dbReference>
<dbReference type="Pfam" id="PF01624">
    <property type="entry name" value="MutS_I"/>
    <property type="match status" value="1"/>
</dbReference>
<dbReference type="Pfam" id="PF05188">
    <property type="entry name" value="MutS_II"/>
    <property type="match status" value="2"/>
</dbReference>
<dbReference type="Pfam" id="PF05192">
    <property type="entry name" value="MutS_III"/>
    <property type="match status" value="1"/>
</dbReference>
<dbReference type="Pfam" id="PF05190">
    <property type="entry name" value="MutS_IV"/>
    <property type="match status" value="1"/>
</dbReference>
<dbReference type="Pfam" id="PF00488">
    <property type="entry name" value="MutS_V"/>
    <property type="match status" value="1"/>
</dbReference>
<dbReference type="PIRSF" id="PIRSF037677">
    <property type="entry name" value="DNA_mis_repair_Msh6"/>
    <property type="match status" value="1"/>
</dbReference>
<dbReference type="SMART" id="SM00534">
    <property type="entry name" value="MUTSac"/>
    <property type="match status" value="1"/>
</dbReference>
<dbReference type="SMART" id="SM00533">
    <property type="entry name" value="MUTSd"/>
    <property type="match status" value="1"/>
</dbReference>
<dbReference type="SUPFAM" id="SSF55271">
    <property type="entry name" value="DNA repair protein MutS, domain I"/>
    <property type="match status" value="1"/>
</dbReference>
<dbReference type="SUPFAM" id="SSF53150">
    <property type="entry name" value="DNA repair protein MutS, domain II"/>
    <property type="match status" value="1"/>
</dbReference>
<dbReference type="SUPFAM" id="SSF48334">
    <property type="entry name" value="DNA repair protein MutS, domain III"/>
    <property type="match status" value="1"/>
</dbReference>
<dbReference type="SUPFAM" id="SSF52540">
    <property type="entry name" value="P-loop containing nucleoside triphosphate hydrolases"/>
    <property type="match status" value="1"/>
</dbReference>
<dbReference type="PROSITE" id="PS00486">
    <property type="entry name" value="DNA_MISMATCH_REPAIR_2"/>
    <property type="match status" value="1"/>
</dbReference>
<proteinExistence type="inferred from homology"/>
<reference key="1">
    <citation type="submission" date="2007-08" db="EMBL/GenBank/DDBJ databases">
        <title>Complete sequence of Roseiflexus castenholzii DSM 13941.</title>
        <authorList>
            <consortium name="US DOE Joint Genome Institute"/>
            <person name="Copeland A."/>
            <person name="Lucas S."/>
            <person name="Lapidus A."/>
            <person name="Barry K."/>
            <person name="Glavina del Rio T."/>
            <person name="Dalin E."/>
            <person name="Tice H."/>
            <person name="Pitluck S."/>
            <person name="Thompson L.S."/>
            <person name="Brettin T."/>
            <person name="Bruce D."/>
            <person name="Detter J.C."/>
            <person name="Han C."/>
            <person name="Tapia R."/>
            <person name="Schmutz J."/>
            <person name="Larimer F."/>
            <person name="Land M."/>
            <person name="Hauser L."/>
            <person name="Kyrpides N."/>
            <person name="Mikhailova N."/>
            <person name="Bryant D.A."/>
            <person name="Hanada S."/>
            <person name="Tsukatani Y."/>
            <person name="Richardson P."/>
        </authorList>
    </citation>
    <scope>NUCLEOTIDE SEQUENCE [LARGE SCALE GENOMIC DNA]</scope>
    <source>
        <strain>DSM 13941 / HLO8</strain>
    </source>
</reference>
<name>MUTS_ROSCS</name>
<evidence type="ECO:0000255" key="1">
    <source>
        <dbReference type="HAMAP-Rule" id="MF_00096"/>
    </source>
</evidence>
<evidence type="ECO:0000256" key="2">
    <source>
        <dbReference type="SAM" id="MobiDB-lite"/>
    </source>
</evidence>
<sequence length="1088" mass="121193">MTPAERRAFERQLQQEFPGLELHAWYRQYRSLKAAHPDAILLYRLGDFYETFDDDAKLVADLLEVTLTYKEFASQKGRDQKQRCPMAGIPYHAVEGYVARLVGAGYRVAIAEQMTETPSSRTDTRPRSIFAAGIEQTALIGGHKMVERKVVRIITPGTIIESGMLPAERNNYLAALIADHGRIGLAYADLSTGEFAAIEFSGERAAQQAQGELARLNPAEILVPDRADLRLPGLEPSSARLEQDLEFLTREERERVLPGERIARRVERENHARWAHGHVTAWSEQRWDLRNARDTLLHQFGVHSLAGFGLADRPLAIRAAGAIVQYARETQQGTVANLRAIRVYTPGDAMVLDPQTQRNLELLEGNSGTTRGSLIGVLDQTRTPMGARLLRRWISQPLCDLARLRARHDAVDHFVNDAILRASVRETLRRVGDMERVVNRIIQGSGVATPRDMARLRDALRALPDLVAALEDWTPPQEDVDLSGMSALQESAALAAAPLDGITPPDDDHTEQEPTTISLRAQREARRRVSARLTGDDLFDEEEEQENAGQPAPLPTTETVRASGESARPSFEMPSLHGHGESPTLDACADILAFLETAIDDDPPALLGASNYLRAGDNGELPRRVIRPGFEPEIDRVVAASRDAQRWISELEPKERERTGIKSLRVDYNRVFGYYIEVPKTYADQVPKHYIRKQTLTTGERYFTDELKRYEEIVEQAQQRLIDLERRAFARICETLAGAGVRLLRTARTIATIDVFAALAEAAVRGRYVRPELYDDTRLRIIGGRHPVVEQTLDETFIPNDIEMDTETRQICLITGPNMSGKSTVLRQVALIALMAQIGSFVPADAAEIGVVDRIFTRIGAQDDIATGRSTFMVEMTETAALLAQSTHRSLIILDEVGRGTSTYDGMAIAQAVIEYIHNEPRLGCRTLFATHYHELTDLERTLPRLKNYHMAATEQDGRVVFLHELRPGGADRSYGIHVAELAGIPQPVIRRATELLAELERRAPRSTPQPAPERTEERPAAGRPTARSHSAARGDPPRAPDGQLSLFDLTPGPVIEMLRRLDINQLTPLEALNKLYELQKLARIGGG</sequence>
<gene>
    <name evidence="1" type="primary">mutS</name>
    <name type="ordered locus">Rcas_3531</name>
</gene>
<feature type="chain" id="PRO_0000335219" description="DNA mismatch repair protein MutS">
    <location>
        <begin position="1"/>
        <end position="1088"/>
    </location>
</feature>
<feature type="region of interest" description="Disordered" evidence="2">
    <location>
        <begin position="498"/>
        <end position="579"/>
    </location>
</feature>
<feature type="region of interest" description="Disordered" evidence="2">
    <location>
        <begin position="1000"/>
        <end position="1048"/>
    </location>
</feature>
<feature type="compositionally biased region" description="Acidic residues" evidence="2">
    <location>
        <begin position="537"/>
        <end position="546"/>
    </location>
</feature>
<feature type="binding site" evidence="1">
    <location>
        <begin position="816"/>
        <end position="823"/>
    </location>
    <ligand>
        <name>ATP</name>
        <dbReference type="ChEBI" id="CHEBI:30616"/>
    </ligand>
</feature>
<protein>
    <recommendedName>
        <fullName evidence="1">DNA mismatch repair protein MutS</fullName>
    </recommendedName>
</protein>